<keyword id="KW-0025">Alternative splicing</keyword>
<keyword id="KW-0489">Methyltransferase</keyword>
<keyword id="KW-1185">Reference proteome</keyword>
<keyword id="KW-0694">RNA-binding</keyword>
<keyword id="KW-0698">rRNA processing</keyword>
<keyword id="KW-0949">S-adenosyl-L-methionine</keyword>
<keyword id="KW-0808">Transferase</keyword>
<dbReference type="EC" id="2.1.1.-" evidence="4 5 8"/>
<dbReference type="EMBL" id="BX284602">
    <property type="protein sequence ID" value="CAB70100.3"/>
    <property type="molecule type" value="Genomic_DNA"/>
</dbReference>
<dbReference type="EMBL" id="BX284602">
    <property type="protein sequence ID" value="CAB70101.2"/>
    <property type="molecule type" value="Genomic_DNA"/>
</dbReference>
<dbReference type="EMBL" id="BX284602">
    <property type="protein sequence ID" value="CDH93054.1"/>
    <property type="molecule type" value="Genomic_DNA"/>
</dbReference>
<dbReference type="RefSeq" id="NP_001293548.1">
    <molecule id="Q9NAA7-3"/>
    <property type="nucleotide sequence ID" value="NM_001306619.3"/>
</dbReference>
<dbReference type="RefSeq" id="NP_001366973.1">
    <molecule id="Q9NAA7-2"/>
    <property type="nucleotide sequence ID" value="NM_001381672.1"/>
</dbReference>
<dbReference type="RefSeq" id="NP_001366974.1">
    <molecule id="Q9NAA7-1"/>
    <property type="nucleotide sequence ID" value="NM_001381671.1"/>
</dbReference>
<dbReference type="RefSeq" id="NP_497088.3">
    <property type="nucleotide sequence ID" value="NM_064687.5"/>
</dbReference>
<dbReference type="RefSeq" id="NP_497089.2">
    <property type="nucleotide sequence ID" value="NM_064688.4"/>
</dbReference>
<dbReference type="SMR" id="Q9NAA7"/>
<dbReference type="FunCoup" id="Q9NAA7">
    <property type="interactions" value="2312"/>
</dbReference>
<dbReference type="IntAct" id="Q9NAA7">
    <property type="interactions" value="1"/>
</dbReference>
<dbReference type="STRING" id="6239.Y53F4B.4b.2"/>
<dbReference type="PaxDb" id="6239-Y53F4B.4b"/>
<dbReference type="PeptideAtlas" id="Q9NAA7"/>
<dbReference type="EnsemblMetazoa" id="Y53F4B.4a.1">
    <molecule id="Q9NAA7-2"/>
    <property type="protein sequence ID" value="Y53F4B.4a.1"/>
    <property type="gene ID" value="WBGene00013151"/>
</dbReference>
<dbReference type="EnsemblMetazoa" id="Y53F4B.4a.2">
    <molecule id="Q9NAA7-2"/>
    <property type="protein sequence ID" value="Y53F4B.4a.2"/>
    <property type="gene ID" value="WBGene00013151"/>
</dbReference>
<dbReference type="EnsemblMetazoa" id="Y53F4B.4a.3">
    <molecule id="Q9NAA7-2"/>
    <property type="protein sequence ID" value="Y53F4B.4a.3"/>
    <property type="gene ID" value="WBGene00013151"/>
</dbReference>
<dbReference type="EnsemblMetazoa" id="Y53F4B.4b.1">
    <molecule id="Q9NAA7-1"/>
    <property type="protein sequence ID" value="Y53F4B.4b.1"/>
    <property type="gene ID" value="WBGene00013151"/>
</dbReference>
<dbReference type="EnsemblMetazoa" id="Y53F4B.4c.1">
    <molecule id="Q9NAA7-3"/>
    <property type="protein sequence ID" value="Y53F4B.4c.1"/>
    <property type="gene ID" value="WBGene00013151"/>
</dbReference>
<dbReference type="GeneID" id="175153"/>
<dbReference type="KEGG" id="cel:CELE_Y53F4B.4"/>
<dbReference type="UCSC" id="Y53F4B.4a">
    <property type="organism name" value="c. elegans"/>
</dbReference>
<dbReference type="AGR" id="WB:WBGene00013151"/>
<dbReference type="CTD" id="175153"/>
<dbReference type="WormBase" id="Y53F4B.4a">
    <molecule id="Q9NAA7-2"/>
    <property type="protein sequence ID" value="CE39655"/>
    <property type="gene ID" value="WBGene00013151"/>
    <property type="gene designation" value="nsun-5"/>
</dbReference>
<dbReference type="WormBase" id="Y53F4B.4b">
    <molecule id="Q9NAA7-1"/>
    <property type="protein sequence ID" value="CE35679"/>
    <property type="gene ID" value="WBGene00013151"/>
    <property type="gene designation" value="nsun-5"/>
</dbReference>
<dbReference type="WormBase" id="Y53F4B.4c">
    <molecule id="Q9NAA7-3"/>
    <property type="protein sequence ID" value="CE49086"/>
    <property type="gene ID" value="WBGene00013151"/>
    <property type="gene designation" value="nsun-5"/>
</dbReference>
<dbReference type="eggNOG" id="KOG2360">
    <property type="taxonomic scope" value="Eukaryota"/>
</dbReference>
<dbReference type="GeneTree" id="ENSGT00940000155974"/>
<dbReference type="HOGENOM" id="CLU_005316_7_4_1"/>
<dbReference type="InParanoid" id="Q9NAA7"/>
<dbReference type="OMA" id="SFKSRIY"/>
<dbReference type="OrthoDB" id="417697at2759"/>
<dbReference type="PhylomeDB" id="Q9NAA7"/>
<dbReference type="PRO" id="PR:Q9NAA7"/>
<dbReference type="Proteomes" id="UP000001940">
    <property type="component" value="Chromosome II"/>
</dbReference>
<dbReference type="Bgee" id="WBGene00013151">
    <property type="expression patterns" value="Expressed in germ line (C elegans) and 4 other cell types or tissues"/>
</dbReference>
<dbReference type="ExpressionAtlas" id="Q9NAA7">
    <property type="expression patterns" value="baseline and differential"/>
</dbReference>
<dbReference type="GO" id="GO:0005730">
    <property type="term" value="C:nucleolus"/>
    <property type="evidence" value="ECO:0000318"/>
    <property type="project" value="GO_Central"/>
</dbReference>
<dbReference type="GO" id="GO:0003723">
    <property type="term" value="F:RNA binding"/>
    <property type="evidence" value="ECO:0007669"/>
    <property type="project" value="UniProtKB-KW"/>
</dbReference>
<dbReference type="GO" id="GO:0009383">
    <property type="term" value="F:rRNA (cytosine-C5-)-methyltransferase activity"/>
    <property type="evidence" value="ECO:0000314"/>
    <property type="project" value="UniProtKB"/>
</dbReference>
<dbReference type="GO" id="GO:1900035">
    <property type="term" value="P:negative regulation of cellular response to heat"/>
    <property type="evidence" value="ECO:0000315"/>
    <property type="project" value="UniProtKB"/>
</dbReference>
<dbReference type="GO" id="GO:0090327">
    <property type="term" value="P:negative regulation of locomotion involved in locomotory behavior"/>
    <property type="evidence" value="ECO:0000315"/>
    <property type="project" value="UniProtKB"/>
</dbReference>
<dbReference type="GO" id="GO:2000234">
    <property type="term" value="P:positive regulation of rRNA processing"/>
    <property type="evidence" value="ECO:0000315"/>
    <property type="project" value="UniProtKB"/>
</dbReference>
<dbReference type="GO" id="GO:0070475">
    <property type="term" value="P:rRNA base methylation"/>
    <property type="evidence" value="ECO:0000314"/>
    <property type="project" value="UniProtKB"/>
</dbReference>
<dbReference type="FunFam" id="3.30.70.1170:FF:000016">
    <property type="entry name" value="Nop2 (NOP2)/SUN domain family member"/>
    <property type="match status" value="1"/>
</dbReference>
<dbReference type="FunFam" id="3.40.50.150:FF:000720">
    <property type="entry name" value="Nop2 (NOP2)/SUN domain family member"/>
    <property type="match status" value="1"/>
</dbReference>
<dbReference type="Gene3D" id="3.30.70.1170">
    <property type="entry name" value="Sun protein, domain 3"/>
    <property type="match status" value="1"/>
</dbReference>
<dbReference type="Gene3D" id="3.40.50.150">
    <property type="entry name" value="Vaccinia Virus protein VP39"/>
    <property type="match status" value="1"/>
</dbReference>
<dbReference type="InterPro" id="IPR049560">
    <property type="entry name" value="MeTrfase_RsmB-F_NOP2_cat"/>
</dbReference>
<dbReference type="InterPro" id="IPR001678">
    <property type="entry name" value="MeTrfase_RsmB-F_NOP2_dom"/>
</dbReference>
<dbReference type="InterPro" id="IPR049561">
    <property type="entry name" value="NSUN5_7_fdxn-like"/>
</dbReference>
<dbReference type="InterPro" id="IPR048889">
    <property type="entry name" value="NSUN5_RCM1_N"/>
</dbReference>
<dbReference type="InterPro" id="IPR023267">
    <property type="entry name" value="RCMT"/>
</dbReference>
<dbReference type="InterPro" id="IPR029063">
    <property type="entry name" value="SAM-dependent_MTases_sf"/>
</dbReference>
<dbReference type="PANTHER" id="PTHR22807:SF4">
    <property type="entry name" value="28S RRNA (CYTOSINE-C(5))-METHYLTRANSFERASE"/>
    <property type="match status" value="1"/>
</dbReference>
<dbReference type="PANTHER" id="PTHR22807">
    <property type="entry name" value="NOP2 YEAST -RELATED NOL1/NOP2/FMU SUN DOMAIN-CONTAINING"/>
    <property type="match status" value="1"/>
</dbReference>
<dbReference type="Pfam" id="PF01189">
    <property type="entry name" value="Methyltr_RsmB-F"/>
    <property type="match status" value="1"/>
</dbReference>
<dbReference type="Pfam" id="PF21148">
    <property type="entry name" value="NSUN5_fdxn-like"/>
    <property type="match status" value="1"/>
</dbReference>
<dbReference type="Pfam" id="PF21153">
    <property type="entry name" value="NSUN5_N"/>
    <property type="match status" value="1"/>
</dbReference>
<dbReference type="PRINTS" id="PR02008">
    <property type="entry name" value="RCMTFAMILY"/>
</dbReference>
<dbReference type="SUPFAM" id="SSF53335">
    <property type="entry name" value="S-adenosyl-L-methionine-dependent methyltransferases"/>
    <property type="match status" value="1"/>
</dbReference>
<dbReference type="PROSITE" id="PS51686">
    <property type="entry name" value="SAM_MT_RSMB_NOP"/>
    <property type="match status" value="1"/>
</dbReference>
<proteinExistence type="evidence at protein level"/>
<feature type="chain" id="PRO_0000449822" description="26S rRNA (cytosine-C(5))-methyltransferase nsun-5">
    <location>
        <begin position="1"/>
        <end position="439"/>
    </location>
</feature>
<feature type="active site" description="Nucleophile" evidence="1">
    <location>
        <position position="366"/>
    </location>
</feature>
<feature type="binding site" evidence="1">
    <location>
        <position position="266"/>
    </location>
    <ligand>
        <name>S-adenosyl-L-methionine</name>
        <dbReference type="ChEBI" id="CHEBI:59789"/>
    </ligand>
</feature>
<feature type="binding site" evidence="1">
    <location>
        <position position="293"/>
    </location>
    <ligand>
        <name>S-adenosyl-L-methionine</name>
        <dbReference type="ChEBI" id="CHEBI:59789"/>
    </ligand>
</feature>
<feature type="binding site" evidence="1">
    <location>
        <position position="313"/>
    </location>
    <ligand>
        <name>S-adenosyl-L-methionine</name>
        <dbReference type="ChEBI" id="CHEBI:59789"/>
    </ligand>
</feature>
<feature type="splice variant" id="VSP_060574" description="In isoform a." evidence="7">
    <location>
        <begin position="1"/>
        <end position="154"/>
    </location>
</feature>
<feature type="splice variant" id="VSP_060575" description="In isoform c." evidence="7">
    <location>
        <begin position="1"/>
        <end position="64"/>
    </location>
</feature>
<protein>
    <recommendedName>
        <fullName evidence="7">26S rRNA (cytosine-C(5))-methyltransferase nsun-5</fullName>
        <ecNumber evidence="4 5 8">2.1.1.-</ecNumber>
    </recommendedName>
    <alternativeName>
        <fullName>5-methylcytosine rRNA methyltransferase nsun-5</fullName>
    </alternativeName>
    <alternativeName>
        <fullName evidence="6">NOL1/NOP2/Sun domain family member 5</fullName>
    </alternativeName>
    <alternativeName>
        <fullName evidence="7">RNA cytosine C(5)-methyltransferase nsun-5</fullName>
    </alternativeName>
    <alternativeName>
        <fullName evidence="7">rRNA cytosine C(5)-methyltransferase nsun-5</fullName>
    </alternativeName>
</protein>
<name>NSUN5_CAEEL</name>
<reference key="1">
    <citation type="journal article" date="1998" name="Science">
        <title>Genome sequence of the nematode C. elegans: a platform for investigating biology.</title>
        <authorList>
            <consortium name="The C. elegans sequencing consortium"/>
        </authorList>
    </citation>
    <scope>NUCLEOTIDE SEQUENCE [LARGE SCALE GENOMIC DNA]</scope>
    <source>
        <strain>Bristol N2</strain>
    </source>
</reference>
<reference key="2">
    <citation type="journal article" date="2015" name="Nat. Commun.">
        <title>Methylation of ribosomal RNA by NSUN5 is a conserved mechanism modulating organismal lifespan.</title>
        <authorList>
            <person name="Schosserer M."/>
            <person name="Minois N."/>
            <person name="Angerer T.B."/>
            <person name="Amring M."/>
            <person name="Dellago H."/>
            <person name="Harreither E."/>
            <person name="Calle-Perez A."/>
            <person name="Pircher A."/>
            <person name="Gerstl M.P."/>
            <person name="Pfeifenberger S."/>
            <person name="Brandl C."/>
            <person name="Sonntagbauer M."/>
            <person name="Kriegner A."/>
            <person name="Linder A."/>
            <person name="Weinhaeusel A."/>
            <person name="Mohr T."/>
            <person name="Steiger M."/>
            <person name="Mattanovich D."/>
            <person name="Rinnerthaler M."/>
            <person name="Karl T."/>
            <person name="Sharma S."/>
            <person name="Entian K.D."/>
            <person name="Kos M."/>
            <person name="Breitenbach M."/>
            <person name="Wilson I.B."/>
            <person name="Polacek N."/>
            <person name="Grillari-Voglauer R."/>
            <person name="Breitenbach-Koller L."/>
            <person name="Grillari J."/>
        </authorList>
    </citation>
    <scope>FUNCTION</scope>
    <scope>CATALYTIC ACTIVITY</scope>
    <scope>DISRUPTION PHENOTYPE</scope>
</reference>
<reference key="3">
    <citation type="journal article" date="2019" name="Cell. Physiol. Biochem.">
        <title>A Novel Caenorhabditis Elegans Proteinopathy Model Shows Changes in mRNA Translational Frameshifting During Aging.</title>
        <authorList>
            <person name="Adamla F."/>
            <person name="Rollins J."/>
            <person name="Newsom M."/>
            <person name="Snow S."/>
            <person name="Schosserer M."/>
            <person name="Heissenberger C."/>
            <person name="Horrocks J."/>
            <person name="Rogers A.N."/>
            <person name="Ignatova Z."/>
        </authorList>
    </citation>
    <scope>FUNCTION</scope>
    <scope>DISRUPTION PHENOTYPE</scope>
</reference>
<reference key="4">
    <citation type="journal article" date="2020" name="Elife">
        <title>The ribosomal RNA m5C methyltransferase NSUN-1 modulates healthspan and oogenesis in Caenorhabditis elegans.</title>
        <authorList>
            <person name="Heissenberger C."/>
            <person name="Rollins J.A."/>
            <person name="Krammer T.L."/>
            <person name="Nagelreiter F."/>
            <person name="Stocker I."/>
            <person name="Wacheul L."/>
            <person name="Shpylovyi A."/>
            <person name="Tav K."/>
            <person name="Snow S."/>
            <person name="Grillari J."/>
            <person name="Rogers A.N."/>
            <person name="Lafontaine D.L."/>
            <person name="Schosserer M."/>
        </authorList>
    </citation>
    <scope>FUNCTION</scope>
    <scope>CATALYTIC ACTIVITY</scope>
</reference>
<reference key="5">
    <citation type="journal article" date="2020" name="EMBO J.">
        <title>Translational adaptation to heat stress is mediated by RNA 5-methylcytosine in Caenorhabditis elegans.</title>
        <authorList>
            <person name="Navarro I.C."/>
            <person name="Tuorto F."/>
            <person name="Jordan D."/>
            <person name="Legrand C."/>
            <person name="Price J."/>
            <person name="Braukmann F."/>
            <person name="Hendrick A.G."/>
            <person name="Akay A."/>
            <person name="Kotter A."/>
            <person name="Helm M."/>
            <person name="Lyko F."/>
            <person name="Miska E.A."/>
        </authorList>
    </citation>
    <scope>FUNCTION</scope>
    <scope>CATALYTIC ACTIVITY</scope>
    <scope>DISRUPTION PHENOTYPE</scope>
</reference>
<evidence type="ECO:0000255" key="1">
    <source>
        <dbReference type="PROSITE-ProRule" id="PRU01023"/>
    </source>
</evidence>
<evidence type="ECO:0000269" key="2">
    <source>
    </source>
</evidence>
<evidence type="ECO:0000269" key="3">
    <source>
    </source>
</evidence>
<evidence type="ECO:0000269" key="4">
    <source>
    </source>
</evidence>
<evidence type="ECO:0000269" key="5">
    <source>
    </source>
</evidence>
<evidence type="ECO:0000303" key="6">
    <source>
    </source>
</evidence>
<evidence type="ECO:0000305" key="7"/>
<evidence type="ECO:0000305" key="8">
    <source>
    </source>
</evidence>
<evidence type="ECO:0000305" key="9">
    <source>
    </source>
</evidence>
<evidence type="ECO:0000312" key="10">
    <source>
        <dbReference type="WormBase" id="Y53F4B.4a"/>
    </source>
</evidence>
<evidence type="ECO:0000312" key="11">
    <source>
        <dbReference type="WormBase" id="Y53F4B.4b"/>
    </source>
</evidence>
<evidence type="ECO:0000312" key="12">
    <source>
        <dbReference type="WormBase" id="Y53F4B.4c"/>
    </source>
</evidence>
<organism>
    <name type="scientific">Caenorhabditis elegans</name>
    <dbReference type="NCBI Taxonomy" id="6239"/>
    <lineage>
        <taxon>Eukaryota</taxon>
        <taxon>Metazoa</taxon>
        <taxon>Ecdysozoa</taxon>
        <taxon>Nematoda</taxon>
        <taxon>Chromadorea</taxon>
        <taxon>Rhabditida</taxon>
        <taxon>Rhabditina</taxon>
        <taxon>Rhabditomorpha</taxon>
        <taxon>Rhabditoidea</taxon>
        <taxon>Rhabditidae</taxon>
        <taxon>Peloderinae</taxon>
        <taxon>Caenorhabditis</taxon>
    </lineage>
</organism>
<accession>Q9NAA7</accession>
<accession>Q9NAA8</accession>
<accession>U4PB26</accession>
<comment type="function">
    <text evidence="2 3 4 5 9">S-adenosyl-L-methionine-dependent methyltransferase which methylates the carbon-5 position of cytosine 2381 to 5-methylcytosine (m5C2381) in 26S rRNA (PubMed:25635753, PubMed:33283887, PubMed:33289480). Plays a role in the production of mature 5S, 5.8S, 18S and 26S rRNAs and promotes the processing of the internally transcribed spacer 2 (ITS2), which separates the 5.8S and 26S rRNAs on large pre-rRNA precursors (PubMed:33289480). May play a role in the translation of leucine and proline codons (Probable). May play a role in maintaining ribosomal frameshifting in response to osmotic stress (PubMed:30977983). Not required for global translation (PubMed:33289480).</text>
</comment>
<comment type="catalytic activity">
    <reaction evidence="4 5 8">
        <text>a cytidine in 26S rRNA + S-adenosyl-L-methionine = a 5-methylcytidine in 26S rRNA + S-adenosyl-L-homocysteine + H(+)</text>
        <dbReference type="Rhea" id="RHEA:66588"/>
        <dbReference type="Rhea" id="RHEA-COMP:17065"/>
        <dbReference type="Rhea" id="RHEA-COMP:17066"/>
        <dbReference type="ChEBI" id="CHEBI:15378"/>
        <dbReference type="ChEBI" id="CHEBI:57856"/>
        <dbReference type="ChEBI" id="CHEBI:59789"/>
        <dbReference type="ChEBI" id="CHEBI:74483"/>
        <dbReference type="ChEBI" id="CHEBI:82748"/>
    </reaction>
</comment>
<comment type="alternative products">
    <event type="alternative splicing"/>
    <isoform>
        <id>Q9NAA7-1</id>
        <name evidence="11">b</name>
        <sequence type="displayed"/>
    </isoform>
    <isoform>
        <id>Q9NAA7-2</id>
        <name evidence="10">a</name>
        <sequence type="described" ref="VSP_060574"/>
    </isoform>
    <isoform>
        <id>Q9NAA7-3</id>
        <name evidence="12">c</name>
        <sequence type="described" ref="VSP_060575"/>
    </isoform>
</comment>
<comment type="disruption phenotype">
    <text evidence="2 3 4">RNAi-mediated knockdown increases lifespan and stress resistance (PubMed:25635753). RNAi-mediated knockdown results in a higher frequency of gene products that arise as a consequence of increased ribosomal frameshifting in response to osmotic stress induced by high salt concentrations in adults (PubMed:30977983). RNAi-mediated knockdown does not result in fertility defects (PubMed:33283887).</text>
</comment>
<comment type="similarity">
    <text evidence="1">Belongs to the class I-like SAM-binding methyltransferase superfamily. RsmB/NOP family.</text>
</comment>
<sequence length="439" mass="49839">MATDALYNEVAEIIRCVLAKEKSVRNAVYGSSYKNKKALLRLSCESLKFRPVFDEILQDKELKSMKRDANIGGSVELLYVLMYETLVGSGLTRCSQELKSVISRRIQRIKEVEHAMQDEGRGIKAMKEADDGMKKIQIPRYARINTLKWTADEAMKTLETEKWKILGTLKPENFAEMVTKMKDDEVYVDPHVENLIIFAPNIQNFYEYWMVEQRYLILQDKASCLPAFLLNPRPGSQVFDTCAAPGMKTSHAAAIMENQGKVWAMDRAADRVATMKQLLDASKVAIASSFCGDFLKTDVTDKKFSKVKFAIVDPPCSGSGIVKRMDEITGGNAEKERLEKLKNLQAMILKHALKLPGLKRAVYSTCSVHEEENEQVVDEVLLDTYVRQNYVLKKNVLPEWTYRGLKTYEVGEHCLRANPKVTLTNGFFVAVFERVKSSE</sequence>
<gene>
    <name evidence="6 11" type="primary">nsun-5</name>
    <name evidence="11" type="ORF">Y53F4B.4</name>
</gene>